<feature type="chain" id="PRO_0000206480" description="UPF0735 ACT domain-containing protein SE_1326">
    <location>
        <begin position="1"/>
        <end position="151"/>
    </location>
</feature>
<feature type="domain" description="ACT" evidence="1">
    <location>
        <begin position="74"/>
        <end position="149"/>
    </location>
</feature>
<protein>
    <recommendedName>
        <fullName evidence="1">UPF0735 ACT domain-containing protein SE_1326</fullName>
    </recommendedName>
</protein>
<reference key="1">
    <citation type="journal article" date="2003" name="Mol. Microbiol.">
        <title>Genome-based analysis of virulence genes in a non-biofilm-forming Staphylococcus epidermidis strain (ATCC 12228).</title>
        <authorList>
            <person name="Zhang Y.-Q."/>
            <person name="Ren S.-X."/>
            <person name="Li H.-L."/>
            <person name="Wang Y.-X."/>
            <person name="Fu G."/>
            <person name="Yang J."/>
            <person name="Qin Z.-Q."/>
            <person name="Miao Y.-G."/>
            <person name="Wang W.-Y."/>
            <person name="Chen R.-S."/>
            <person name="Shen Y."/>
            <person name="Chen Z."/>
            <person name="Yuan Z.-H."/>
            <person name="Zhao G.-P."/>
            <person name="Qu D."/>
            <person name="Danchin A."/>
            <person name="Wen Y.-M."/>
        </authorList>
    </citation>
    <scope>NUCLEOTIDE SEQUENCE [LARGE SCALE GENOMIC DNA]</scope>
    <source>
        <strain>ATCC 12228 / FDA PCI 1200</strain>
    </source>
</reference>
<organism>
    <name type="scientific">Staphylococcus epidermidis (strain ATCC 12228 / FDA PCI 1200)</name>
    <dbReference type="NCBI Taxonomy" id="176280"/>
    <lineage>
        <taxon>Bacteria</taxon>
        <taxon>Bacillati</taxon>
        <taxon>Bacillota</taxon>
        <taxon>Bacilli</taxon>
        <taxon>Bacillales</taxon>
        <taxon>Staphylococcaceae</taxon>
        <taxon>Staphylococcus</taxon>
    </lineage>
</organism>
<comment type="similarity">
    <text evidence="1">Belongs to the UPF0735 family.</text>
</comment>
<comment type="sequence caution" evidence="2">
    <conflict type="erroneous initiation">
        <sequence resource="EMBL-CDS" id="AAO04925"/>
    </conflict>
</comment>
<name>Y1326_STAES</name>
<dbReference type="EMBL" id="AE015929">
    <property type="protein sequence ID" value="AAO04925.1"/>
    <property type="status" value="ALT_INIT"/>
    <property type="molecule type" value="Genomic_DNA"/>
</dbReference>
<dbReference type="RefSeq" id="NP_764881.1">
    <property type="nucleotide sequence ID" value="NC_004461.1"/>
</dbReference>
<dbReference type="RefSeq" id="WP_001830784.1">
    <property type="nucleotide sequence ID" value="NZ_WBME01000016.1"/>
</dbReference>
<dbReference type="SMR" id="Q8CNZ8"/>
<dbReference type="DNASU" id="1056261"/>
<dbReference type="KEGG" id="sep:SE_1326"/>
<dbReference type="PATRIC" id="fig|176280.10.peg.1295"/>
<dbReference type="eggNOG" id="COG4492">
    <property type="taxonomic scope" value="Bacteria"/>
</dbReference>
<dbReference type="HOGENOM" id="CLU_128147_0_0_9"/>
<dbReference type="OrthoDB" id="9788773at2"/>
<dbReference type="Proteomes" id="UP000001411">
    <property type="component" value="Chromosome"/>
</dbReference>
<dbReference type="Gene3D" id="3.30.70.260">
    <property type="match status" value="1"/>
</dbReference>
<dbReference type="HAMAP" id="MF_00707">
    <property type="entry name" value="UPF0735"/>
    <property type="match status" value="1"/>
</dbReference>
<dbReference type="InterPro" id="IPR045865">
    <property type="entry name" value="ACT-like_dom_sf"/>
</dbReference>
<dbReference type="InterPro" id="IPR002912">
    <property type="entry name" value="ACT_dom"/>
</dbReference>
<dbReference type="InterPro" id="IPR008310">
    <property type="entry name" value="UPF0735_ACT_dom-cont"/>
</dbReference>
<dbReference type="NCBIfam" id="NF003361">
    <property type="entry name" value="PRK04435.1"/>
    <property type="match status" value="1"/>
</dbReference>
<dbReference type="PIRSF" id="PIRSF025624">
    <property type="entry name" value="ACT_PheB"/>
    <property type="match status" value="1"/>
</dbReference>
<dbReference type="SUPFAM" id="SSF55021">
    <property type="entry name" value="ACT-like"/>
    <property type="match status" value="1"/>
</dbReference>
<dbReference type="PROSITE" id="PS51671">
    <property type="entry name" value="ACT"/>
    <property type="match status" value="1"/>
</dbReference>
<sequence length="151" mass="17361">MDNKDNRKFYLIREDVLPESVIKTLKVKDALKNNSNLSIYDAVKQFNLSRSAFYKYRETIFPVDEKILDQREFTLILYVNDIVGMLAQVLNAISQLQLSVLTIHQSVPIEDKATITLSLNARNSNLSIDEVIESLREINHVTKVDLISMTM</sequence>
<proteinExistence type="inferred from homology"/>
<accession>Q8CNZ8</accession>
<evidence type="ECO:0000255" key="1">
    <source>
        <dbReference type="HAMAP-Rule" id="MF_00707"/>
    </source>
</evidence>
<evidence type="ECO:0000305" key="2"/>
<gene>
    <name type="ordered locus">SE_1326</name>
</gene>